<gene>
    <name type="primary">cobS</name>
</gene>
<organism>
    <name type="scientific">Sinorhizobium sp</name>
    <dbReference type="NCBI Taxonomy" id="42445"/>
    <lineage>
        <taxon>Bacteria</taxon>
        <taxon>Pseudomonadati</taxon>
        <taxon>Pseudomonadota</taxon>
        <taxon>Alphaproteobacteria</taxon>
        <taxon>Hyphomicrobiales</taxon>
        <taxon>Rhizobiaceae</taxon>
        <taxon>Sinorhizobium/Ensifer group</taxon>
        <taxon>Sinorhizobium</taxon>
    </lineage>
</organism>
<protein>
    <recommendedName>
        <fullName>Aerobic cobaltochelatase subunit CobS</fullName>
        <ecNumber>6.6.1.2</ecNumber>
    </recommendedName>
    <alternativeName>
        <fullName>Hydrogenobyrinic acid a,c-diamide cobaltochelatase subunit CobS</fullName>
    </alternativeName>
</protein>
<sequence length="332" mass="36983">MMSKIDLDISNLPDTTISVREVFGIDTDLRVPAYSKGDAYVPDLDPDYLFDRETTLAILAGFAHNRRVMVSGYHGTGKSTHIEQVAARLNWPCVRVNLDSHVSRIDLVGKDAIVVKDGLQVTEFKDGILPWAYQHNVALVFDEYDAGRPDVMFVIQRVLESSGRLTLLDQSRVIRPHPAFRLFATANTVGLGDTTGLYHGTQQINQAQMDRWSIVTTLNYLPHDKEVDIVAAKVKGFTADKGRETVSKMVRVADLTRAAFINGDLSTVMSPRTVITWAENAHIFGDIAFAFRVTFLNKCDELERALVAEHYQRAFGIELKECAANIVLEATA</sequence>
<feature type="chain" id="PRO_0000089994" description="Aerobic cobaltochelatase subunit CobS">
    <location>
        <begin position="1"/>
        <end position="332"/>
    </location>
</feature>
<dbReference type="EC" id="6.6.1.2"/>
<dbReference type="EMBL" id="M62869">
    <property type="protein sequence ID" value="AAA25792.1"/>
    <property type="molecule type" value="Genomic_DNA"/>
</dbReference>
<dbReference type="SMR" id="P29933"/>
<dbReference type="KEGG" id="ag:AAA25792"/>
<dbReference type="BioCyc" id="MetaCyc:MONOMER-117"/>
<dbReference type="BRENDA" id="6.6.1.2">
    <property type="organism ID" value="5114"/>
</dbReference>
<dbReference type="UniPathway" id="UPA00148">
    <property type="reaction ID" value="UER00221"/>
</dbReference>
<dbReference type="GO" id="GO:0005737">
    <property type="term" value="C:cytoplasm"/>
    <property type="evidence" value="ECO:0007669"/>
    <property type="project" value="UniProtKB-SubCell"/>
</dbReference>
<dbReference type="GO" id="GO:0005524">
    <property type="term" value="F:ATP binding"/>
    <property type="evidence" value="ECO:0007669"/>
    <property type="project" value="UniProtKB-KW"/>
</dbReference>
<dbReference type="GO" id="GO:0016887">
    <property type="term" value="F:ATP hydrolysis activity"/>
    <property type="evidence" value="ECO:0007669"/>
    <property type="project" value="InterPro"/>
</dbReference>
<dbReference type="GO" id="GO:0051116">
    <property type="term" value="F:cobaltochelatase activity"/>
    <property type="evidence" value="ECO:0007669"/>
    <property type="project" value="UniProtKB-EC"/>
</dbReference>
<dbReference type="GO" id="GO:0009236">
    <property type="term" value="P:cobalamin biosynthetic process"/>
    <property type="evidence" value="ECO:0007669"/>
    <property type="project" value="UniProtKB-UniPathway"/>
</dbReference>
<dbReference type="GO" id="GO:0006779">
    <property type="term" value="P:porphyrin-containing compound biosynthetic process"/>
    <property type="evidence" value="ECO:0007669"/>
    <property type="project" value="UniProtKB-KW"/>
</dbReference>
<dbReference type="Gene3D" id="3.40.50.300">
    <property type="entry name" value="P-loop containing nucleotide triphosphate hydrolases"/>
    <property type="match status" value="1"/>
</dbReference>
<dbReference type="InterPro" id="IPR011704">
    <property type="entry name" value="ATPase_dyneun-rel_AAA"/>
</dbReference>
<dbReference type="InterPro" id="IPR050764">
    <property type="entry name" value="CbbQ/NirQ/NorQ/GpvN"/>
</dbReference>
<dbReference type="InterPro" id="IPR025865">
    <property type="entry name" value="CobS_N_dom"/>
</dbReference>
<dbReference type="InterPro" id="IPR027417">
    <property type="entry name" value="P-loop_NTPase"/>
</dbReference>
<dbReference type="InterPro" id="IPR006537">
    <property type="entry name" value="PD_CobS"/>
</dbReference>
<dbReference type="NCBIfam" id="TIGR01650">
    <property type="entry name" value="PD_CobS"/>
    <property type="match status" value="1"/>
</dbReference>
<dbReference type="PANTHER" id="PTHR42759:SF1">
    <property type="entry name" value="MAGNESIUM-CHELATASE SUBUNIT CHLD"/>
    <property type="match status" value="1"/>
</dbReference>
<dbReference type="PANTHER" id="PTHR42759">
    <property type="entry name" value="MOXR FAMILY PROTEIN"/>
    <property type="match status" value="1"/>
</dbReference>
<dbReference type="Pfam" id="PF07728">
    <property type="entry name" value="AAA_5"/>
    <property type="match status" value="1"/>
</dbReference>
<dbReference type="Pfam" id="PF12556">
    <property type="entry name" value="CobS_N"/>
    <property type="match status" value="1"/>
</dbReference>
<dbReference type="SUPFAM" id="SSF52540">
    <property type="entry name" value="P-loop containing nucleoside triphosphate hydrolases"/>
    <property type="match status" value="1"/>
</dbReference>
<evidence type="ECO:0000305" key="1"/>
<name>COBS_SINSX</name>
<proteinExistence type="evidence at protein level"/>
<comment type="function">
    <text>Catalyzes cobalt insertion in the corrin ring.</text>
</comment>
<comment type="catalytic activity">
    <reaction>
        <text>hydrogenobyrinate a,c-diamide + Co(2+) + ATP + H2O = cob(II)yrinate a,c diamide + ADP + phosphate + 5 H(+)</text>
        <dbReference type="Rhea" id="RHEA:15341"/>
        <dbReference type="ChEBI" id="CHEBI:15377"/>
        <dbReference type="ChEBI" id="CHEBI:15378"/>
        <dbReference type="ChEBI" id="CHEBI:30616"/>
        <dbReference type="ChEBI" id="CHEBI:43474"/>
        <dbReference type="ChEBI" id="CHEBI:48828"/>
        <dbReference type="ChEBI" id="CHEBI:58537"/>
        <dbReference type="ChEBI" id="CHEBI:77874"/>
        <dbReference type="ChEBI" id="CHEBI:456216"/>
        <dbReference type="EC" id="6.6.1.2"/>
    </reaction>
</comment>
<comment type="pathway">
    <text>Cofactor biosynthesis; adenosylcobalamin biosynthesis; cob(II)yrinate a,c-diamide from precorrin-2 (aerobic route): step 10/10.</text>
</comment>
<comment type="subunit">
    <text>Heterotrimer of CobN, CobS and CobT.</text>
</comment>
<comment type="subcellular location">
    <subcellularLocation>
        <location evidence="1">Cytoplasm</location>
    </subcellularLocation>
</comment>
<comment type="caution">
    <text evidence="1">Was originally thought to originate from Pseudomonas denitrificans, but similarity searches show that the sequence is much closer to Sinorhizobium. The entry's taxonomy has been changed.</text>
</comment>
<keyword id="KW-0067">ATP-binding</keyword>
<keyword id="KW-0169">Cobalamin biosynthesis</keyword>
<keyword id="KW-0963">Cytoplasm</keyword>
<keyword id="KW-0436">Ligase</keyword>
<keyword id="KW-0547">Nucleotide-binding</keyword>
<keyword id="KW-0627">Porphyrin biosynthesis</keyword>
<accession>P29933</accession>
<reference key="1">
    <citation type="journal article" date="1991" name="J. Bacteriol.">
        <title>Genetic and sequence analyses of a Pseudomonas denitrificans DNA fragment containing two cob genes.</title>
        <authorList>
            <person name="Cameron B."/>
            <person name="Guilhot C."/>
            <person name="Blanche F."/>
            <person name="Cauchois L."/>
            <person name="Rouyez M.-C."/>
            <person name="Rigault S."/>
            <person name="Levy-Schil S."/>
            <person name="Crouzet J."/>
        </authorList>
    </citation>
    <scope>NUCLEOTIDE SEQUENCE [GENOMIC DNA]</scope>
    <source>
        <strain>SC510</strain>
    </source>
</reference>
<reference key="2">
    <citation type="journal article" date="1992" name="J. Bacteriol.">
        <title>Assay, purification, and characterization of cobaltochelatase, a unique complex enzyme catalyzing cobalt insertion in hydrogenobyrinic acid a,c-diamide during coenzyme B12 biosynthesis in Pseudomonas denitrificans.</title>
        <authorList>
            <person name="Debussche L."/>
            <person name="Couder M."/>
            <person name="Thibaut D."/>
            <person name="Cameron B."/>
            <person name="Crouzet J."/>
            <person name="Blanche F."/>
        </authorList>
    </citation>
    <scope>CHARACTERIZATION</scope>
</reference>